<reference key="1">
    <citation type="journal article" date="1997" name="Proc. Natl. Acad. Sci. U.S.A.">
        <title>Molecular cloning of a peroxisomal Ca2+-dependent member of the mitochondrial carrier superfamily.</title>
        <authorList>
            <person name="Weber F.E."/>
            <person name="Minestrini G."/>
            <person name="Dyer J.H."/>
            <person name="Werder M."/>
            <person name="Boffelli D."/>
            <person name="Compassi S."/>
            <person name="Wehrli E."/>
            <person name="Thomas R.M."/>
            <person name="Schulthess G."/>
            <person name="Hauser H."/>
        </authorList>
    </citation>
    <scope>NUCLEOTIDE SEQUENCE [MRNA]</scope>
    <scope>SUBCELLULAR LOCATION</scope>
    <scope>TOPOLOGY</scope>
    <scope>CALCIUM-BINDING</scope>
    <scope>TISSUE SPECIFICITY</scope>
    <source>
        <tissue>Small intestine</tissue>
    </source>
</reference>
<proteinExistence type="evidence at protein level"/>
<keyword id="KW-0007">Acetylation</keyword>
<keyword id="KW-0050">Antiport</keyword>
<keyword id="KW-0106">Calcium</keyword>
<keyword id="KW-0472">Membrane</keyword>
<keyword id="KW-0479">Metal-binding</keyword>
<keyword id="KW-0496">Mitochondrion</keyword>
<keyword id="KW-0999">Mitochondrion inner membrane</keyword>
<keyword id="KW-0576">Peroxisome</keyword>
<keyword id="KW-1185">Reference proteome</keyword>
<keyword id="KW-0677">Repeat</keyword>
<keyword id="KW-0812">Transmembrane</keyword>
<keyword id="KW-1133">Transmembrane helix</keyword>
<keyword id="KW-0813">Transport</keyword>
<evidence type="ECO:0000250" key="1">
    <source>
        <dbReference type="UniProtKB" id="Q6NUK1"/>
    </source>
</evidence>
<evidence type="ECO:0000250" key="2">
    <source>
        <dbReference type="UniProtKB" id="Q8BMD8"/>
    </source>
</evidence>
<evidence type="ECO:0000255" key="3"/>
<evidence type="ECO:0000255" key="4">
    <source>
        <dbReference type="PROSITE-ProRule" id="PRU00282"/>
    </source>
</evidence>
<evidence type="ECO:0000255" key="5">
    <source>
        <dbReference type="PROSITE-ProRule" id="PRU00448"/>
    </source>
</evidence>
<evidence type="ECO:0000269" key="6">
    <source>
    </source>
</evidence>
<evidence type="ECO:0000303" key="7">
    <source>
    </source>
</evidence>
<evidence type="ECO:0000305" key="8"/>
<evidence type="ECO:0000305" key="9">
    <source>
    </source>
</evidence>
<accession>O18757</accession>
<dbReference type="EMBL" id="AF004161">
    <property type="protein sequence ID" value="AAB69156.1"/>
    <property type="molecule type" value="mRNA"/>
</dbReference>
<dbReference type="PIR" id="T50686">
    <property type="entry name" value="T50686"/>
</dbReference>
<dbReference type="RefSeq" id="NP_001076246.1">
    <property type="nucleotide sequence ID" value="NM_001082777.1"/>
</dbReference>
<dbReference type="SMR" id="O18757"/>
<dbReference type="FunCoup" id="O18757">
    <property type="interactions" value="1537"/>
</dbReference>
<dbReference type="STRING" id="9986.ENSOCUP00000028224"/>
<dbReference type="PaxDb" id="9986-ENSOCUP00000011022"/>
<dbReference type="GeneID" id="100009567"/>
<dbReference type="KEGG" id="ocu:100009567"/>
<dbReference type="CTD" id="29957"/>
<dbReference type="eggNOG" id="KOG0036">
    <property type="taxonomic scope" value="Eukaryota"/>
</dbReference>
<dbReference type="InParanoid" id="O18757"/>
<dbReference type="OrthoDB" id="270584at2759"/>
<dbReference type="Proteomes" id="UP000001811">
    <property type="component" value="Unplaced"/>
</dbReference>
<dbReference type="GO" id="GO:0016020">
    <property type="term" value="C:membrane"/>
    <property type="evidence" value="ECO:0000250"/>
    <property type="project" value="UniProtKB"/>
</dbReference>
<dbReference type="GO" id="GO:0005743">
    <property type="term" value="C:mitochondrial inner membrane"/>
    <property type="evidence" value="ECO:0007669"/>
    <property type="project" value="UniProtKB-SubCell"/>
</dbReference>
<dbReference type="GO" id="GO:0005739">
    <property type="term" value="C:mitochondrion"/>
    <property type="evidence" value="ECO:0000250"/>
    <property type="project" value="UniProtKB"/>
</dbReference>
<dbReference type="GO" id="GO:0005778">
    <property type="term" value="C:peroxisomal membrane"/>
    <property type="evidence" value="ECO:0007669"/>
    <property type="project" value="UniProtKB-SubCell"/>
</dbReference>
<dbReference type="GO" id="GO:0000295">
    <property type="term" value="F:adenine nucleotide transmembrane transporter activity"/>
    <property type="evidence" value="ECO:0000250"/>
    <property type="project" value="UniProtKB"/>
</dbReference>
<dbReference type="GO" id="GO:0140988">
    <property type="term" value="F:ADP:phosphate antiporter activity"/>
    <property type="evidence" value="ECO:0000250"/>
    <property type="project" value="UniProtKB"/>
</dbReference>
<dbReference type="GO" id="GO:0140987">
    <property type="term" value="F:ATP:phosphate antiporter activity"/>
    <property type="evidence" value="ECO:0000250"/>
    <property type="project" value="UniProtKB"/>
</dbReference>
<dbReference type="GO" id="GO:0005509">
    <property type="term" value="F:calcium ion binding"/>
    <property type="evidence" value="ECO:0000250"/>
    <property type="project" value="UniProtKB"/>
</dbReference>
<dbReference type="GO" id="GO:0051503">
    <property type="term" value="P:adenine nucleotide transport"/>
    <property type="evidence" value="ECO:0000250"/>
    <property type="project" value="UniProtKB"/>
</dbReference>
<dbReference type="GO" id="GO:0071277">
    <property type="term" value="P:cellular response to calcium ion"/>
    <property type="evidence" value="ECO:0000250"/>
    <property type="project" value="UniProtKB"/>
</dbReference>
<dbReference type="GO" id="GO:1990544">
    <property type="term" value="P:mitochondrial ATP transmembrane transport"/>
    <property type="evidence" value="ECO:0000250"/>
    <property type="project" value="UniProtKB"/>
</dbReference>
<dbReference type="FunFam" id="1.10.238.10:FF:000028">
    <property type="entry name" value="Putative calcium-binding mitochondrial carrier protein scamc-2"/>
    <property type="match status" value="1"/>
</dbReference>
<dbReference type="FunFam" id="1.50.40.10:FF:000003">
    <property type="entry name" value="Putative calcium-binding mitochondrial carrier protein scamc-2"/>
    <property type="match status" value="1"/>
</dbReference>
<dbReference type="FunFam" id="1.10.238.10:FF:000168">
    <property type="entry name" value="Solute carrier family 25 member 24"/>
    <property type="match status" value="1"/>
</dbReference>
<dbReference type="Gene3D" id="1.10.238.10">
    <property type="entry name" value="EF-hand"/>
    <property type="match status" value="2"/>
</dbReference>
<dbReference type="Gene3D" id="1.50.40.10">
    <property type="entry name" value="Mitochondrial carrier domain"/>
    <property type="match status" value="1"/>
</dbReference>
<dbReference type="InterPro" id="IPR011992">
    <property type="entry name" value="EF-hand-dom_pair"/>
</dbReference>
<dbReference type="InterPro" id="IPR018247">
    <property type="entry name" value="EF_Hand_1_Ca_BS"/>
</dbReference>
<dbReference type="InterPro" id="IPR002048">
    <property type="entry name" value="EF_hand_dom"/>
</dbReference>
<dbReference type="InterPro" id="IPR002167">
    <property type="entry name" value="GDC-like"/>
</dbReference>
<dbReference type="InterPro" id="IPR002067">
    <property type="entry name" value="Mit_carrier"/>
</dbReference>
<dbReference type="InterPro" id="IPR018108">
    <property type="entry name" value="Mitochondrial_sb/sol_carrier"/>
</dbReference>
<dbReference type="InterPro" id="IPR023395">
    <property type="entry name" value="Mt_carrier_dom_sf"/>
</dbReference>
<dbReference type="PANTHER" id="PTHR24089">
    <property type="entry name" value="SOLUTE CARRIER FAMILY 25"/>
    <property type="match status" value="1"/>
</dbReference>
<dbReference type="Pfam" id="PF13499">
    <property type="entry name" value="EF-hand_7"/>
    <property type="match status" value="2"/>
</dbReference>
<dbReference type="Pfam" id="PF00153">
    <property type="entry name" value="Mito_carr"/>
    <property type="match status" value="3"/>
</dbReference>
<dbReference type="PRINTS" id="PR00928">
    <property type="entry name" value="GRAVESDC"/>
</dbReference>
<dbReference type="PRINTS" id="PR00926">
    <property type="entry name" value="MITOCARRIER"/>
</dbReference>
<dbReference type="SMART" id="SM00054">
    <property type="entry name" value="EFh"/>
    <property type="match status" value="3"/>
</dbReference>
<dbReference type="SUPFAM" id="SSF47473">
    <property type="entry name" value="EF-hand"/>
    <property type="match status" value="1"/>
</dbReference>
<dbReference type="SUPFAM" id="SSF103506">
    <property type="entry name" value="Mitochondrial carrier"/>
    <property type="match status" value="1"/>
</dbReference>
<dbReference type="PROSITE" id="PS00018">
    <property type="entry name" value="EF_HAND_1"/>
    <property type="match status" value="3"/>
</dbReference>
<dbReference type="PROSITE" id="PS50222">
    <property type="entry name" value="EF_HAND_2"/>
    <property type="match status" value="4"/>
</dbReference>
<dbReference type="PROSITE" id="PS50920">
    <property type="entry name" value="SOLCAR"/>
    <property type="match status" value="3"/>
</dbReference>
<name>SCMC1_RABIT</name>
<gene>
    <name type="primary">SLC25A24</name>
    <name evidence="7" type="synonym">EFINAL</name>
    <name type="synonym">SCAMC1</name>
</gene>
<organism>
    <name type="scientific">Oryctolagus cuniculus</name>
    <name type="common">Rabbit</name>
    <dbReference type="NCBI Taxonomy" id="9986"/>
    <lineage>
        <taxon>Eukaryota</taxon>
        <taxon>Metazoa</taxon>
        <taxon>Chordata</taxon>
        <taxon>Craniata</taxon>
        <taxon>Vertebrata</taxon>
        <taxon>Euteleostomi</taxon>
        <taxon>Mammalia</taxon>
        <taxon>Eutheria</taxon>
        <taxon>Euarchontoglires</taxon>
        <taxon>Glires</taxon>
        <taxon>Lagomorpha</taxon>
        <taxon>Leporidae</taxon>
        <taxon>Oryctolagus</taxon>
    </lineage>
</organism>
<feature type="chain" id="PRO_0000317596" description="Mitochondrial adenyl nucleotide antiporter SLC25A24">
    <location>
        <begin position="1"/>
        <end position="475"/>
    </location>
</feature>
<feature type="topological domain" description="Mitochondrial intermembrane" evidence="9">
    <location>
        <begin position="1"/>
        <end position="197"/>
    </location>
</feature>
<feature type="transmembrane region" description="Helical; Name=1" evidence="3">
    <location>
        <begin position="198"/>
        <end position="215"/>
    </location>
</feature>
<feature type="topological domain" description="Mitochondrial matrix" evidence="9">
    <location>
        <begin position="216"/>
        <end position="250"/>
    </location>
</feature>
<feature type="transmembrane region" description="Helical; Name=2" evidence="3">
    <location>
        <begin position="251"/>
        <end position="270"/>
    </location>
</feature>
<feature type="topological domain" description="Mitochondrial intermembrane" evidence="9">
    <location>
        <begin position="271"/>
        <end position="293"/>
    </location>
</feature>
<feature type="transmembrane region" description="Helical; Name=3" evidence="3">
    <location>
        <begin position="294"/>
        <end position="307"/>
    </location>
</feature>
<feature type="topological domain" description="Mitochondrial matrix" evidence="9">
    <location>
        <begin position="308"/>
        <end position="343"/>
    </location>
</feature>
<feature type="transmembrane region" description="Helical; Name=4" evidence="3">
    <location>
        <begin position="344"/>
        <end position="363"/>
    </location>
</feature>
<feature type="topological domain" description="Mitochondrial intermembrane" evidence="9">
    <location>
        <begin position="364"/>
        <end position="386"/>
    </location>
</feature>
<feature type="transmembrane region" description="Helical; Name=5" evidence="3">
    <location>
        <begin position="387"/>
        <end position="404"/>
    </location>
</feature>
<feature type="topological domain" description="Mitochondrial matrix" evidence="9">
    <location>
        <begin position="405"/>
        <end position="443"/>
    </location>
</feature>
<feature type="transmembrane region" description="Helical; Name=6" evidence="3">
    <location>
        <begin position="444"/>
        <end position="463"/>
    </location>
</feature>
<feature type="topological domain" description="Mitochondrial intermembrane" evidence="9">
    <location>
        <begin position="464"/>
        <end position="475"/>
    </location>
</feature>
<feature type="domain" description="EF-hand 1" evidence="5">
    <location>
        <begin position="19"/>
        <end position="54"/>
    </location>
</feature>
<feature type="domain" description="EF-hand 2" evidence="5">
    <location>
        <begin position="55"/>
        <end position="88"/>
    </location>
</feature>
<feature type="domain" description="EF-hand 3" evidence="5">
    <location>
        <begin position="86"/>
        <end position="121"/>
    </location>
</feature>
<feature type="domain" description="EF-hand 4" evidence="5">
    <location>
        <begin position="122"/>
        <end position="157"/>
    </location>
</feature>
<feature type="repeat" description="Solcar 1" evidence="4">
    <location>
        <begin position="192"/>
        <end position="276"/>
    </location>
</feature>
<feature type="repeat" description="Solcar 2" evidence="4">
    <location>
        <begin position="284"/>
        <end position="369"/>
    </location>
</feature>
<feature type="repeat" description="Solcar 3" evidence="4">
    <location>
        <begin position="381"/>
        <end position="469"/>
    </location>
</feature>
<feature type="region of interest" description="Regulatory N-terminal domain" evidence="1">
    <location>
        <begin position="1"/>
        <end position="173"/>
    </location>
</feature>
<feature type="region of interest" description="Linker region" evidence="1">
    <location>
        <begin position="159"/>
        <end position="168"/>
    </location>
</feature>
<feature type="region of interest" description="C-terminal transmembrane transporter domain" evidence="1">
    <location>
        <begin position="174"/>
        <end position="475"/>
    </location>
</feature>
<feature type="binding site" evidence="5">
    <location>
        <position position="32"/>
    </location>
    <ligand>
        <name>Ca(2+)</name>
        <dbReference type="ChEBI" id="CHEBI:29108"/>
        <label>1</label>
    </ligand>
</feature>
<feature type="binding site" evidence="5">
    <location>
        <position position="34"/>
    </location>
    <ligand>
        <name>Ca(2+)</name>
        <dbReference type="ChEBI" id="CHEBI:29108"/>
        <label>1</label>
    </ligand>
</feature>
<feature type="binding site" evidence="5">
    <location>
        <position position="36"/>
    </location>
    <ligand>
        <name>Ca(2+)</name>
        <dbReference type="ChEBI" id="CHEBI:29108"/>
        <label>1</label>
    </ligand>
</feature>
<feature type="binding site" evidence="1">
    <location>
        <position position="38"/>
    </location>
    <ligand>
        <name>Ca(2+)</name>
        <dbReference type="ChEBI" id="CHEBI:29108"/>
        <label>1</label>
    </ligand>
</feature>
<feature type="binding site" evidence="5">
    <location>
        <position position="43"/>
    </location>
    <ligand>
        <name>Ca(2+)</name>
        <dbReference type="ChEBI" id="CHEBI:29108"/>
        <label>1</label>
    </ligand>
</feature>
<feature type="binding site" evidence="5">
    <location>
        <position position="68"/>
    </location>
    <ligand>
        <name>Ca(2+)</name>
        <dbReference type="ChEBI" id="CHEBI:29108"/>
        <label>2</label>
    </ligand>
</feature>
<feature type="binding site" evidence="5">
    <location>
        <position position="70"/>
    </location>
    <ligand>
        <name>Ca(2+)</name>
        <dbReference type="ChEBI" id="CHEBI:29108"/>
        <label>2</label>
    </ligand>
</feature>
<feature type="binding site" evidence="5">
    <location>
        <position position="72"/>
    </location>
    <ligand>
        <name>Ca(2+)</name>
        <dbReference type="ChEBI" id="CHEBI:29108"/>
        <label>2</label>
    </ligand>
</feature>
<feature type="binding site" evidence="5">
    <location>
        <position position="74"/>
    </location>
    <ligand>
        <name>Ca(2+)</name>
        <dbReference type="ChEBI" id="CHEBI:29108"/>
        <label>2</label>
    </ligand>
</feature>
<feature type="binding site" evidence="5">
    <location>
        <position position="79"/>
    </location>
    <ligand>
        <name>Ca(2+)</name>
        <dbReference type="ChEBI" id="CHEBI:29108"/>
        <label>2</label>
    </ligand>
</feature>
<feature type="binding site" evidence="5">
    <location>
        <position position="99"/>
    </location>
    <ligand>
        <name>Ca(2+)</name>
        <dbReference type="ChEBI" id="CHEBI:29108"/>
        <label>3</label>
    </ligand>
</feature>
<feature type="binding site" evidence="5">
    <location>
        <position position="101"/>
    </location>
    <ligand>
        <name>Ca(2+)</name>
        <dbReference type="ChEBI" id="CHEBI:29108"/>
        <label>3</label>
    </ligand>
</feature>
<feature type="binding site" evidence="5">
    <location>
        <position position="103"/>
    </location>
    <ligand>
        <name>Ca(2+)</name>
        <dbReference type="ChEBI" id="CHEBI:29108"/>
        <label>3</label>
    </ligand>
</feature>
<feature type="binding site" evidence="5">
    <location>
        <position position="105"/>
    </location>
    <ligand>
        <name>Ca(2+)</name>
        <dbReference type="ChEBI" id="CHEBI:29108"/>
        <label>3</label>
    </ligand>
</feature>
<feature type="binding site" evidence="5">
    <location>
        <position position="110"/>
    </location>
    <ligand>
        <name>Ca(2+)</name>
        <dbReference type="ChEBI" id="CHEBI:29108"/>
        <label>3</label>
    </ligand>
</feature>
<feature type="binding site" evidence="1">
    <location>
        <position position="135"/>
    </location>
    <ligand>
        <name>Ca(2+)</name>
        <dbReference type="ChEBI" id="CHEBI:29108"/>
        <label>4</label>
    </ligand>
</feature>
<feature type="binding site" evidence="1">
    <location>
        <position position="137"/>
    </location>
    <ligand>
        <name>Ca(2+)</name>
        <dbReference type="ChEBI" id="CHEBI:29108"/>
        <label>4</label>
    </ligand>
</feature>
<feature type="binding site" evidence="1">
    <location>
        <position position="139"/>
    </location>
    <ligand>
        <name>Ca(2+)</name>
        <dbReference type="ChEBI" id="CHEBI:29108"/>
        <label>4</label>
    </ligand>
</feature>
<feature type="binding site" evidence="1">
    <location>
        <position position="141"/>
    </location>
    <ligand>
        <name>Ca(2+)</name>
        <dbReference type="ChEBI" id="CHEBI:29108"/>
        <label>4</label>
    </ligand>
</feature>
<feature type="binding site" evidence="1">
    <location>
        <position position="146"/>
    </location>
    <ligand>
        <name>Ca(2+)</name>
        <dbReference type="ChEBI" id="CHEBI:29108"/>
        <label>4</label>
    </ligand>
</feature>
<feature type="modified residue" description="N6-acetyllysine; alternate" evidence="2">
    <location>
        <position position="318"/>
    </location>
</feature>
<feature type="modified residue" description="N6-succinyllysine; alternate" evidence="2">
    <location>
        <position position="318"/>
    </location>
</feature>
<feature type="modified residue" description="N6-acetyllysine" evidence="1">
    <location>
        <position position="334"/>
    </location>
</feature>
<feature type="modified residue" description="N6-acetyllysine; alternate" evidence="1">
    <location>
        <position position="435"/>
    </location>
</feature>
<feature type="modified residue" description="N6-succinyllysine; alternate" evidence="2">
    <location>
        <position position="435"/>
    </location>
</feature>
<protein>
    <recommendedName>
        <fullName evidence="1">Mitochondrial adenyl nucleotide antiporter SLC25A24</fullName>
    </recommendedName>
    <alternativeName>
        <fullName evidence="7">Peroxisomal Ca(2+)-dependent solute carrier</fullName>
    </alternativeName>
    <alternativeName>
        <fullName evidence="1">Small calcium-binding mitochondrial carrier protein 1</fullName>
        <shortName evidence="1">SCaMC-1</shortName>
    </alternativeName>
    <alternativeName>
        <fullName>Solute carrier family 25 member 24</fullName>
    </alternativeName>
</protein>
<comment type="function">
    <text evidence="1">Electroneutral antiporter that mediates the transport of adenyl nucleotides through the inner mitochondrial membrane. Originally identified as an ATP-magnesium/inorganic phosphate antiporter, it also acts as a broad specificity adenyl nucleotide antiporter. By regulating the mitochondrial matrix adenyl nucleotide pool could adapt to changing cellular energetic demands and indirectly regulate adenyl nucleotide-dependent metabolic pathways. In vitro, a low activity is also observed with guanyl and pyrimidine nucleotides. May play a role in protecting cells against oxidative stress-induced cell death, by buffering calcium levels in the mitochondrial matrix through the formation of calcium-phosphate precipitates.</text>
</comment>
<comment type="catalytic activity">
    <reaction evidence="1">
        <text>Mg(2+)(out) + phosphate(in) + ATP(out) = Mg(2+)(in) + phosphate(out) + ATP(in)</text>
        <dbReference type="Rhea" id="RHEA:65840"/>
        <dbReference type="ChEBI" id="CHEBI:18420"/>
        <dbReference type="ChEBI" id="CHEBI:30616"/>
        <dbReference type="ChEBI" id="CHEBI:43474"/>
    </reaction>
</comment>
<comment type="catalytic activity">
    <reaction evidence="1">
        <text>ADP(out) + phosphate(in) + H(+)(out) = ADP(in) + phosphate(out) + H(+)(in)</text>
        <dbReference type="Rhea" id="RHEA:65844"/>
        <dbReference type="ChEBI" id="CHEBI:15378"/>
        <dbReference type="ChEBI" id="CHEBI:43474"/>
        <dbReference type="ChEBI" id="CHEBI:456216"/>
    </reaction>
</comment>
<comment type="catalytic activity">
    <reaction evidence="1">
        <text>AMP(out) + phosphate(in) = AMP(in) + phosphate(out)</text>
        <dbReference type="Rhea" id="RHEA:70259"/>
        <dbReference type="ChEBI" id="CHEBI:43474"/>
        <dbReference type="ChEBI" id="CHEBI:456215"/>
    </reaction>
</comment>
<comment type="catalytic activity">
    <reaction evidence="1">
        <text>phosphate(in) + ATP(out) + 2 H(+)(out) = phosphate(out) + ATP(in) + 2 H(+)(in)</text>
        <dbReference type="Rhea" id="RHEA:72035"/>
        <dbReference type="ChEBI" id="CHEBI:15378"/>
        <dbReference type="ChEBI" id="CHEBI:30616"/>
        <dbReference type="ChEBI" id="CHEBI:43474"/>
    </reaction>
</comment>
<comment type="catalytic activity">
    <reaction evidence="1">
        <text>dADP(in) + ADP(out) = dADP(out) + ADP(in)</text>
        <dbReference type="Rhea" id="RHEA:72855"/>
        <dbReference type="ChEBI" id="CHEBI:57667"/>
        <dbReference type="ChEBI" id="CHEBI:456216"/>
    </reaction>
</comment>
<comment type="catalytic activity">
    <reaction evidence="1">
        <text>Mg(2+)(in) + ADP(out) + ATP(in) + H(+)(out) = Mg(2+)(out) + ADP(in) + ATP(out) + H(+)(in)</text>
        <dbReference type="Rhea" id="RHEA:73659"/>
        <dbReference type="ChEBI" id="CHEBI:15378"/>
        <dbReference type="ChEBI" id="CHEBI:18420"/>
        <dbReference type="ChEBI" id="CHEBI:30616"/>
        <dbReference type="ChEBI" id="CHEBI:456216"/>
    </reaction>
</comment>
<comment type="catalytic activity">
    <reaction evidence="1">
        <text>ADP(out) + diphosphate(in) = ADP(in) + diphosphate(out)</text>
        <dbReference type="Rhea" id="RHEA:73671"/>
        <dbReference type="ChEBI" id="CHEBI:33019"/>
        <dbReference type="ChEBI" id="CHEBI:456216"/>
    </reaction>
</comment>
<comment type="catalytic activity">
    <reaction evidence="1">
        <text>dAMP(in) + ADP(out) + H(+)(out) = dAMP(out) + ADP(in) + H(+)(in)</text>
        <dbReference type="Rhea" id="RHEA:73675"/>
        <dbReference type="ChEBI" id="CHEBI:15378"/>
        <dbReference type="ChEBI" id="CHEBI:58245"/>
        <dbReference type="ChEBI" id="CHEBI:456216"/>
    </reaction>
</comment>
<comment type="catalytic activity">
    <reaction evidence="1">
        <text>3'-AMP(in) + ADP(out) + H(+)(out) = 3'-AMP(out) + ADP(in) + H(+)(in)</text>
        <dbReference type="Rhea" id="RHEA:73679"/>
        <dbReference type="ChEBI" id="CHEBI:15378"/>
        <dbReference type="ChEBI" id="CHEBI:60880"/>
        <dbReference type="ChEBI" id="CHEBI:456216"/>
    </reaction>
</comment>
<comment type="catalytic activity">
    <reaction evidence="1">
        <text>dAMP(out) + phosphate(in) = dAMP(in) + phosphate(out)</text>
        <dbReference type="Rhea" id="RHEA:73687"/>
        <dbReference type="ChEBI" id="CHEBI:43474"/>
        <dbReference type="ChEBI" id="CHEBI:58245"/>
    </reaction>
</comment>
<comment type="catalytic activity">
    <reaction evidence="1">
        <text>3'-AMP(out) + phosphate(in) = 3'-AMP(in) + phosphate(out)</text>
        <dbReference type="Rhea" id="RHEA:73691"/>
        <dbReference type="ChEBI" id="CHEBI:43474"/>
        <dbReference type="ChEBI" id="CHEBI:60880"/>
    </reaction>
</comment>
<comment type="catalytic activity">
    <reaction evidence="1">
        <text>dADP(out) + phosphate(in) + H(+)(out) = dADP(in) + phosphate(out) + H(+)(in)</text>
        <dbReference type="Rhea" id="RHEA:73695"/>
        <dbReference type="ChEBI" id="CHEBI:15378"/>
        <dbReference type="ChEBI" id="CHEBI:43474"/>
        <dbReference type="ChEBI" id="CHEBI:57667"/>
    </reaction>
</comment>
<comment type="activity regulation">
    <text evidence="1">Activated by an increase in cytosolic calcium levels that induce a conformational change of the N-terminal regulatory domain, uncapping the channel and allowing transport. Inhibited by bathophenanthroline, mersalyl, p-hydroxymercuribenzoate, bromcresol purple and tannic acid.</text>
</comment>
<comment type="subunit">
    <text evidence="1">Monomer.</text>
</comment>
<comment type="subcellular location">
    <subcellularLocation>
        <location evidence="6">Mitochondrion inner membrane</location>
        <topology evidence="3">Multi-pass membrane protein</topology>
    </subcellularLocation>
    <subcellularLocation>
        <location evidence="6">Peroxisome membrane</location>
        <topology evidence="3">Multi-pass membrane protein</topology>
    </subcellularLocation>
    <text evidence="6">The physiological relevance of the localization to the peroxisome is unclear.</text>
</comment>
<comment type="tissue specificity">
    <text evidence="6">Mainly expressed in colon. Also expressed in the small intestine proximal to the ileum. Weakly expressed in kidney but not in the liver.</text>
</comment>
<comment type="domain">
    <text evidence="1">The regulatory N-terminal domain/NTD formed of two pairs of fused calcium-binding EF-hands, binds calcium in the mitochondrial intermembrane space and regulates the antiporter activity of the transmembrane domain/TMD. In absence of calcium, the apo form of the N-terminal domain is intrinsically disordered and binds to the transmembrane domain, inhibiting the transporter activity. Binding of calcium leads to a major conformational change and abolishes the interaction with the transmembrane domain and the inhibition of the transporter activity.</text>
</comment>
<comment type="domain">
    <text evidence="1">The C-terminal mitochondrial carrier domain/transmembrane domain/TMD bears the transmembrane transporter activity.</text>
</comment>
<comment type="domain">
    <text evidence="1">Linker region/H9 could directly block the transport of substrates across the transporter.</text>
</comment>
<comment type="similarity">
    <text evidence="8">Belongs to the mitochondrial carrier (TC 2.A.29) family.</text>
</comment>
<sequence length="475" mass="53006">MLRWLRGFVLPTAACQGAEPPTRYETLFQALDRNGDGVVDIRELQEGLKSLGIPLGQDAEEKIFTTGDVNKDGKLDFEEFMKYLKDHEKKMKLAFKSLDKNNDGKIEASEIVQSLQTLGLTISEQQAELILQSIDADGTMTVDWNEWRDYFLFNPVADIEEIIRFWKHSTGIDIGDSLTIPDEFTEEERKSGQWWRQLLAGGIAGAVSRTSTAPLDRLKVMMQVHGSKSMNIFGGFRQMIKEGGVRSLWRGNGTNVIKIAPETAVKFWVYEQYKKLLTEEGQKIGTFERFISGSMAGATAQTFIYPMEVMKTRLAVGKTGQYSGIYDCAKKILKYEGFGAFYKGYVPNLLGIIPYAGIDLAVYELLKSHWLDNFAKDSVNPGVLVLLGCGALSSTCGQLASYPLALVRTRMQAQAMLEGAPQLNMVGLFRRIISKEGLPGLYRGITPNFMKVLPAVGISYVVYENMKQTLGVTQK</sequence>